<keyword id="KW-1185">Reference proteome</keyword>
<keyword id="KW-0687">Ribonucleoprotein</keyword>
<keyword id="KW-0689">Ribosomal protein</keyword>
<keyword id="KW-0694">RNA-binding</keyword>
<keyword id="KW-0699">rRNA-binding</keyword>
<keyword id="KW-0820">tRNA-binding</keyword>
<name>RS13_DESAH</name>
<feature type="chain" id="PRO_1000214389" description="Small ribosomal subunit protein uS13">
    <location>
        <begin position="1"/>
        <end position="122"/>
    </location>
</feature>
<feature type="region of interest" description="Disordered" evidence="2">
    <location>
        <begin position="95"/>
        <end position="122"/>
    </location>
</feature>
<feature type="compositionally biased region" description="Basic residues" evidence="2">
    <location>
        <begin position="108"/>
        <end position="122"/>
    </location>
</feature>
<gene>
    <name evidence="1" type="primary">rpsM</name>
    <name type="ordered locus">HRM2_36030</name>
</gene>
<protein>
    <recommendedName>
        <fullName evidence="1">Small ribosomal subunit protein uS13</fullName>
    </recommendedName>
    <alternativeName>
        <fullName evidence="3">30S ribosomal protein S13</fullName>
    </alternativeName>
</protein>
<accession>C0Q9V0</accession>
<dbReference type="EMBL" id="CP001087">
    <property type="protein sequence ID" value="ACN16668.1"/>
    <property type="molecule type" value="Genomic_DNA"/>
</dbReference>
<dbReference type="RefSeq" id="WP_015905418.1">
    <property type="nucleotide sequence ID" value="NC_012108.1"/>
</dbReference>
<dbReference type="SMR" id="C0Q9V0"/>
<dbReference type="STRING" id="177437.HRM2_36030"/>
<dbReference type="KEGG" id="dat:HRM2_36030"/>
<dbReference type="eggNOG" id="COG0099">
    <property type="taxonomic scope" value="Bacteria"/>
</dbReference>
<dbReference type="HOGENOM" id="CLU_103849_1_2_7"/>
<dbReference type="OrthoDB" id="9803610at2"/>
<dbReference type="Proteomes" id="UP000000442">
    <property type="component" value="Chromosome"/>
</dbReference>
<dbReference type="GO" id="GO:0005829">
    <property type="term" value="C:cytosol"/>
    <property type="evidence" value="ECO:0007669"/>
    <property type="project" value="TreeGrafter"/>
</dbReference>
<dbReference type="GO" id="GO:0015935">
    <property type="term" value="C:small ribosomal subunit"/>
    <property type="evidence" value="ECO:0007669"/>
    <property type="project" value="TreeGrafter"/>
</dbReference>
<dbReference type="GO" id="GO:0019843">
    <property type="term" value="F:rRNA binding"/>
    <property type="evidence" value="ECO:0007669"/>
    <property type="project" value="UniProtKB-UniRule"/>
</dbReference>
<dbReference type="GO" id="GO:0003735">
    <property type="term" value="F:structural constituent of ribosome"/>
    <property type="evidence" value="ECO:0007669"/>
    <property type="project" value="InterPro"/>
</dbReference>
<dbReference type="GO" id="GO:0000049">
    <property type="term" value="F:tRNA binding"/>
    <property type="evidence" value="ECO:0007669"/>
    <property type="project" value="UniProtKB-UniRule"/>
</dbReference>
<dbReference type="GO" id="GO:0006412">
    <property type="term" value="P:translation"/>
    <property type="evidence" value="ECO:0007669"/>
    <property type="project" value="UniProtKB-UniRule"/>
</dbReference>
<dbReference type="FunFam" id="1.10.8.50:FF:000001">
    <property type="entry name" value="30S ribosomal protein S13"/>
    <property type="match status" value="1"/>
</dbReference>
<dbReference type="FunFam" id="4.10.910.10:FF:000001">
    <property type="entry name" value="30S ribosomal protein S13"/>
    <property type="match status" value="1"/>
</dbReference>
<dbReference type="Gene3D" id="1.10.8.50">
    <property type="match status" value="1"/>
</dbReference>
<dbReference type="Gene3D" id="4.10.910.10">
    <property type="entry name" value="30s ribosomal protein s13, domain 2"/>
    <property type="match status" value="1"/>
</dbReference>
<dbReference type="HAMAP" id="MF_01315">
    <property type="entry name" value="Ribosomal_uS13"/>
    <property type="match status" value="1"/>
</dbReference>
<dbReference type="InterPro" id="IPR027437">
    <property type="entry name" value="Rbsml_uS13_C"/>
</dbReference>
<dbReference type="InterPro" id="IPR001892">
    <property type="entry name" value="Ribosomal_uS13"/>
</dbReference>
<dbReference type="InterPro" id="IPR010979">
    <property type="entry name" value="Ribosomal_uS13-like_H2TH"/>
</dbReference>
<dbReference type="InterPro" id="IPR019980">
    <property type="entry name" value="Ribosomal_uS13_bac-type"/>
</dbReference>
<dbReference type="InterPro" id="IPR018269">
    <property type="entry name" value="Ribosomal_uS13_CS"/>
</dbReference>
<dbReference type="NCBIfam" id="TIGR03631">
    <property type="entry name" value="uS13_bact"/>
    <property type="match status" value="1"/>
</dbReference>
<dbReference type="PANTHER" id="PTHR10871">
    <property type="entry name" value="30S RIBOSOMAL PROTEIN S13/40S RIBOSOMAL PROTEIN S18"/>
    <property type="match status" value="1"/>
</dbReference>
<dbReference type="PANTHER" id="PTHR10871:SF1">
    <property type="entry name" value="SMALL RIBOSOMAL SUBUNIT PROTEIN US13M"/>
    <property type="match status" value="1"/>
</dbReference>
<dbReference type="Pfam" id="PF00416">
    <property type="entry name" value="Ribosomal_S13"/>
    <property type="match status" value="1"/>
</dbReference>
<dbReference type="PIRSF" id="PIRSF002134">
    <property type="entry name" value="Ribosomal_S13"/>
    <property type="match status" value="1"/>
</dbReference>
<dbReference type="SUPFAM" id="SSF46946">
    <property type="entry name" value="S13-like H2TH domain"/>
    <property type="match status" value="1"/>
</dbReference>
<dbReference type="PROSITE" id="PS00646">
    <property type="entry name" value="RIBOSOMAL_S13_1"/>
    <property type="match status" value="1"/>
</dbReference>
<dbReference type="PROSITE" id="PS50159">
    <property type="entry name" value="RIBOSOMAL_S13_2"/>
    <property type="match status" value="1"/>
</dbReference>
<sequence length="122" mass="13902">MARIAGVDLPRNKHVEIALTYIYGIGRTRSQQILEKVGINPTLKSDALTEEQVNDIRKVIDSDFKVEGELRTQISMNIKRLMDLGCYRGLRHRKSLPCRGQRTSTNARTRKGPKRAAVKKKK</sequence>
<evidence type="ECO:0000255" key="1">
    <source>
        <dbReference type="HAMAP-Rule" id="MF_01315"/>
    </source>
</evidence>
<evidence type="ECO:0000256" key="2">
    <source>
        <dbReference type="SAM" id="MobiDB-lite"/>
    </source>
</evidence>
<evidence type="ECO:0000305" key="3"/>
<reference key="1">
    <citation type="journal article" date="2009" name="Environ. Microbiol.">
        <title>Genome sequence of Desulfobacterium autotrophicum HRM2, a marine sulfate reducer oxidizing organic carbon completely to carbon dioxide.</title>
        <authorList>
            <person name="Strittmatter A.W."/>
            <person name="Liesegang H."/>
            <person name="Rabus R."/>
            <person name="Decker I."/>
            <person name="Amann J."/>
            <person name="Andres S."/>
            <person name="Henne A."/>
            <person name="Fricke W.F."/>
            <person name="Martinez-Arias R."/>
            <person name="Bartels D."/>
            <person name="Goesmann A."/>
            <person name="Krause L."/>
            <person name="Puehler A."/>
            <person name="Klenk H.P."/>
            <person name="Richter M."/>
            <person name="Schuler M."/>
            <person name="Gloeckner F.O."/>
            <person name="Meyerdierks A."/>
            <person name="Gottschalk G."/>
            <person name="Amann R."/>
        </authorList>
    </citation>
    <scope>NUCLEOTIDE SEQUENCE [LARGE SCALE GENOMIC DNA]</scope>
    <source>
        <strain>ATCC 43914 / DSM 3382 / VKM B-1955 / HRM2</strain>
    </source>
</reference>
<comment type="function">
    <text evidence="1">Located at the top of the head of the 30S subunit, it contacts several helices of the 16S rRNA. In the 70S ribosome it contacts the 23S rRNA (bridge B1a) and protein L5 of the 50S subunit (bridge B1b), connecting the 2 subunits; these bridges are implicated in subunit movement. Contacts the tRNAs in the A and P-sites.</text>
</comment>
<comment type="subunit">
    <text evidence="1">Part of the 30S ribosomal subunit. Forms a loose heterodimer with protein S19. Forms two bridges to the 50S subunit in the 70S ribosome.</text>
</comment>
<comment type="similarity">
    <text evidence="1">Belongs to the universal ribosomal protein uS13 family.</text>
</comment>
<proteinExistence type="inferred from homology"/>
<organism>
    <name type="scientific">Desulforapulum autotrophicum (strain ATCC 43914 / DSM 3382 / VKM B-1955 / HRM2)</name>
    <name type="common">Desulfobacterium autotrophicum</name>
    <dbReference type="NCBI Taxonomy" id="177437"/>
    <lineage>
        <taxon>Bacteria</taxon>
        <taxon>Pseudomonadati</taxon>
        <taxon>Thermodesulfobacteriota</taxon>
        <taxon>Desulfobacteria</taxon>
        <taxon>Desulfobacterales</taxon>
        <taxon>Desulfobacteraceae</taxon>
        <taxon>Desulforapulum</taxon>
    </lineage>
</organism>